<reference key="1">
    <citation type="journal article" date="2002" name="Biochemistry">
        <title>Molecular cloning and characterization of a tumor-associated, growth-related, and time-keeping hydroquinone (NADH) oxidase (tNOX) of the HeLa cell surface.</title>
        <authorList>
            <person name="Chueh P.-J."/>
            <person name="Kim C."/>
            <person name="Cho N."/>
            <person name="Morre D.M."/>
            <person name="Morre D.J."/>
        </authorList>
    </citation>
    <scope>NUCLEOTIDE SEQUENCE [MRNA] (ISOFORM 1)</scope>
    <scope>ACTIVITY REGULATION</scope>
    <scope>MUTAGENESIS OF MET-396; CYS-505; CYS-510; HIS-546; CYS-558; HIS-562; CYS-569; CYS-575; GLY-592 AND CYS-602</scope>
    <scope>COFACTOR</scope>
</reference>
<reference key="2">
    <citation type="journal article" date="2004" name="Nat. Genet.">
        <title>Complete sequencing and characterization of 21,243 full-length human cDNAs.</title>
        <authorList>
            <person name="Ota T."/>
            <person name="Suzuki Y."/>
            <person name="Nishikawa T."/>
            <person name="Otsuki T."/>
            <person name="Sugiyama T."/>
            <person name="Irie R."/>
            <person name="Wakamatsu A."/>
            <person name="Hayashi K."/>
            <person name="Sato H."/>
            <person name="Nagai K."/>
            <person name="Kimura K."/>
            <person name="Makita H."/>
            <person name="Sekine M."/>
            <person name="Obayashi M."/>
            <person name="Nishi T."/>
            <person name="Shibahara T."/>
            <person name="Tanaka T."/>
            <person name="Ishii S."/>
            <person name="Yamamoto J."/>
            <person name="Saito K."/>
            <person name="Kawai Y."/>
            <person name="Isono Y."/>
            <person name="Nakamura Y."/>
            <person name="Nagahari K."/>
            <person name="Murakami K."/>
            <person name="Yasuda T."/>
            <person name="Iwayanagi T."/>
            <person name="Wagatsuma M."/>
            <person name="Shiratori A."/>
            <person name="Sudo H."/>
            <person name="Hosoiri T."/>
            <person name="Kaku Y."/>
            <person name="Kodaira H."/>
            <person name="Kondo H."/>
            <person name="Sugawara M."/>
            <person name="Takahashi M."/>
            <person name="Kanda K."/>
            <person name="Yokoi T."/>
            <person name="Furuya T."/>
            <person name="Kikkawa E."/>
            <person name="Omura Y."/>
            <person name="Abe K."/>
            <person name="Kamihara K."/>
            <person name="Katsuta N."/>
            <person name="Sato K."/>
            <person name="Tanikawa M."/>
            <person name="Yamazaki M."/>
            <person name="Ninomiya K."/>
            <person name="Ishibashi T."/>
            <person name="Yamashita H."/>
            <person name="Murakawa K."/>
            <person name="Fujimori K."/>
            <person name="Tanai H."/>
            <person name="Kimata M."/>
            <person name="Watanabe M."/>
            <person name="Hiraoka S."/>
            <person name="Chiba Y."/>
            <person name="Ishida S."/>
            <person name="Ono Y."/>
            <person name="Takiguchi S."/>
            <person name="Watanabe S."/>
            <person name="Yosida M."/>
            <person name="Hotuta T."/>
            <person name="Kusano J."/>
            <person name="Kanehori K."/>
            <person name="Takahashi-Fujii A."/>
            <person name="Hara H."/>
            <person name="Tanase T.-O."/>
            <person name="Nomura Y."/>
            <person name="Togiya S."/>
            <person name="Komai F."/>
            <person name="Hara R."/>
            <person name="Takeuchi K."/>
            <person name="Arita M."/>
            <person name="Imose N."/>
            <person name="Musashino K."/>
            <person name="Yuuki H."/>
            <person name="Oshima A."/>
            <person name="Sasaki N."/>
            <person name="Aotsuka S."/>
            <person name="Yoshikawa Y."/>
            <person name="Matsunawa H."/>
            <person name="Ichihara T."/>
            <person name="Shiohata N."/>
            <person name="Sano S."/>
            <person name="Moriya S."/>
            <person name="Momiyama H."/>
            <person name="Satoh N."/>
            <person name="Takami S."/>
            <person name="Terashima Y."/>
            <person name="Suzuki O."/>
            <person name="Nakagawa S."/>
            <person name="Senoh A."/>
            <person name="Mizoguchi H."/>
            <person name="Goto Y."/>
            <person name="Shimizu F."/>
            <person name="Wakebe H."/>
            <person name="Hishigaki H."/>
            <person name="Watanabe T."/>
            <person name="Sugiyama A."/>
            <person name="Takemoto M."/>
            <person name="Kawakami B."/>
            <person name="Yamazaki M."/>
            <person name="Watanabe K."/>
            <person name="Kumagai A."/>
            <person name="Itakura S."/>
            <person name="Fukuzumi Y."/>
            <person name="Fujimori Y."/>
            <person name="Komiyama M."/>
            <person name="Tashiro H."/>
            <person name="Tanigami A."/>
            <person name="Fujiwara T."/>
            <person name="Ono T."/>
            <person name="Yamada K."/>
            <person name="Fujii Y."/>
            <person name="Ozaki K."/>
            <person name="Hirao M."/>
            <person name="Ohmori Y."/>
            <person name="Kawabata A."/>
            <person name="Hikiji T."/>
            <person name="Kobatake N."/>
            <person name="Inagaki H."/>
            <person name="Ikema Y."/>
            <person name="Okamoto S."/>
            <person name="Okitani R."/>
            <person name="Kawakami T."/>
            <person name="Noguchi S."/>
            <person name="Itoh T."/>
            <person name="Shigeta K."/>
            <person name="Senba T."/>
            <person name="Matsumura K."/>
            <person name="Nakajima Y."/>
            <person name="Mizuno T."/>
            <person name="Morinaga M."/>
            <person name="Sasaki M."/>
            <person name="Togashi T."/>
            <person name="Oyama M."/>
            <person name="Hata H."/>
            <person name="Watanabe M."/>
            <person name="Komatsu T."/>
            <person name="Mizushima-Sugano J."/>
            <person name="Satoh T."/>
            <person name="Shirai Y."/>
            <person name="Takahashi Y."/>
            <person name="Nakagawa K."/>
            <person name="Okumura K."/>
            <person name="Nagase T."/>
            <person name="Nomura N."/>
            <person name="Kikuchi H."/>
            <person name="Masuho Y."/>
            <person name="Yamashita R."/>
            <person name="Nakai K."/>
            <person name="Yada T."/>
            <person name="Nakamura Y."/>
            <person name="Ohara O."/>
            <person name="Isogai T."/>
            <person name="Sugano S."/>
        </authorList>
    </citation>
    <scope>NUCLEOTIDE SEQUENCE [LARGE SCALE MRNA] (ISOFORMS 1 AND 2)</scope>
    <source>
        <tissue>Brain</tissue>
    </source>
</reference>
<reference key="3">
    <citation type="journal article" date="2005" name="Nature">
        <title>The DNA sequence of the human X chromosome.</title>
        <authorList>
            <person name="Ross M.T."/>
            <person name="Grafham D.V."/>
            <person name="Coffey A.J."/>
            <person name="Scherer S."/>
            <person name="McLay K."/>
            <person name="Muzny D."/>
            <person name="Platzer M."/>
            <person name="Howell G.R."/>
            <person name="Burrows C."/>
            <person name="Bird C.P."/>
            <person name="Frankish A."/>
            <person name="Lovell F.L."/>
            <person name="Howe K.L."/>
            <person name="Ashurst J.L."/>
            <person name="Fulton R.S."/>
            <person name="Sudbrak R."/>
            <person name="Wen G."/>
            <person name="Jones M.C."/>
            <person name="Hurles M.E."/>
            <person name="Andrews T.D."/>
            <person name="Scott C.E."/>
            <person name="Searle S."/>
            <person name="Ramser J."/>
            <person name="Whittaker A."/>
            <person name="Deadman R."/>
            <person name="Carter N.P."/>
            <person name="Hunt S.E."/>
            <person name="Chen R."/>
            <person name="Cree A."/>
            <person name="Gunaratne P."/>
            <person name="Havlak P."/>
            <person name="Hodgson A."/>
            <person name="Metzker M.L."/>
            <person name="Richards S."/>
            <person name="Scott G."/>
            <person name="Steffen D."/>
            <person name="Sodergren E."/>
            <person name="Wheeler D.A."/>
            <person name="Worley K.C."/>
            <person name="Ainscough R."/>
            <person name="Ambrose K.D."/>
            <person name="Ansari-Lari M.A."/>
            <person name="Aradhya S."/>
            <person name="Ashwell R.I."/>
            <person name="Babbage A.K."/>
            <person name="Bagguley C.L."/>
            <person name="Ballabio A."/>
            <person name="Banerjee R."/>
            <person name="Barker G.E."/>
            <person name="Barlow K.F."/>
            <person name="Barrett I.P."/>
            <person name="Bates K.N."/>
            <person name="Beare D.M."/>
            <person name="Beasley H."/>
            <person name="Beasley O."/>
            <person name="Beck A."/>
            <person name="Bethel G."/>
            <person name="Blechschmidt K."/>
            <person name="Brady N."/>
            <person name="Bray-Allen S."/>
            <person name="Bridgeman A.M."/>
            <person name="Brown A.J."/>
            <person name="Brown M.J."/>
            <person name="Bonnin D."/>
            <person name="Bruford E.A."/>
            <person name="Buhay C."/>
            <person name="Burch P."/>
            <person name="Burford D."/>
            <person name="Burgess J."/>
            <person name="Burrill W."/>
            <person name="Burton J."/>
            <person name="Bye J.M."/>
            <person name="Carder C."/>
            <person name="Carrel L."/>
            <person name="Chako J."/>
            <person name="Chapman J.C."/>
            <person name="Chavez D."/>
            <person name="Chen E."/>
            <person name="Chen G."/>
            <person name="Chen Y."/>
            <person name="Chen Z."/>
            <person name="Chinault C."/>
            <person name="Ciccodicola A."/>
            <person name="Clark S.Y."/>
            <person name="Clarke G."/>
            <person name="Clee C.M."/>
            <person name="Clegg S."/>
            <person name="Clerc-Blankenburg K."/>
            <person name="Clifford K."/>
            <person name="Cobley V."/>
            <person name="Cole C.G."/>
            <person name="Conquer J.S."/>
            <person name="Corby N."/>
            <person name="Connor R.E."/>
            <person name="David R."/>
            <person name="Davies J."/>
            <person name="Davis C."/>
            <person name="Davis J."/>
            <person name="Delgado O."/>
            <person name="Deshazo D."/>
            <person name="Dhami P."/>
            <person name="Ding Y."/>
            <person name="Dinh H."/>
            <person name="Dodsworth S."/>
            <person name="Draper H."/>
            <person name="Dugan-Rocha S."/>
            <person name="Dunham A."/>
            <person name="Dunn M."/>
            <person name="Durbin K.J."/>
            <person name="Dutta I."/>
            <person name="Eades T."/>
            <person name="Ellwood M."/>
            <person name="Emery-Cohen A."/>
            <person name="Errington H."/>
            <person name="Evans K.L."/>
            <person name="Faulkner L."/>
            <person name="Francis F."/>
            <person name="Frankland J."/>
            <person name="Fraser A.E."/>
            <person name="Galgoczy P."/>
            <person name="Gilbert J."/>
            <person name="Gill R."/>
            <person name="Gloeckner G."/>
            <person name="Gregory S.G."/>
            <person name="Gribble S."/>
            <person name="Griffiths C."/>
            <person name="Grocock R."/>
            <person name="Gu Y."/>
            <person name="Gwilliam R."/>
            <person name="Hamilton C."/>
            <person name="Hart E.A."/>
            <person name="Hawes A."/>
            <person name="Heath P.D."/>
            <person name="Heitmann K."/>
            <person name="Hennig S."/>
            <person name="Hernandez J."/>
            <person name="Hinzmann B."/>
            <person name="Ho S."/>
            <person name="Hoffs M."/>
            <person name="Howden P.J."/>
            <person name="Huckle E.J."/>
            <person name="Hume J."/>
            <person name="Hunt P.J."/>
            <person name="Hunt A.R."/>
            <person name="Isherwood J."/>
            <person name="Jacob L."/>
            <person name="Johnson D."/>
            <person name="Jones S."/>
            <person name="de Jong P.J."/>
            <person name="Joseph S.S."/>
            <person name="Keenan S."/>
            <person name="Kelly S."/>
            <person name="Kershaw J.K."/>
            <person name="Khan Z."/>
            <person name="Kioschis P."/>
            <person name="Klages S."/>
            <person name="Knights A.J."/>
            <person name="Kosiura A."/>
            <person name="Kovar-Smith C."/>
            <person name="Laird G.K."/>
            <person name="Langford C."/>
            <person name="Lawlor S."/>
            <person name="Leversha M."/>
            <person name="Lewis L."/>
            <person name="Liu W."/>
            <person name="Lloyd C."/>
            <person name="Lloyd D.M."/>
            <person name="Loulseged H."/>
            <person name="Loveland J.E."/>
            <person name="Lovell J.D."/>
            <person name="Lozado R."/>
            <person name="Lu J."/>
            <person name="Lyne R."/>
            <person name="Ma J."/>
            <person name="Maheshwari M."/>
            <person name="Matthews L.H."/>
            <person name="McDowall J."/>
            <person name="McLaren S."/>
            <person name="McMurray A."/>
            <person name="Meidl P."/>
            <person name="Meitinger T."/>
            <person name="Milne S."/>
            <person name="Miner G."/>
            <person name="Mistry S.L."/>
            <person name="Morgan M."/>
            <person name="Morris S."/>
            <person name="Mueller I."/>
            <person name="Mullikin J.C."/>
            <person name="Nguyen N."/>
            <person name="Nordsiek G."/>
            <person name="Nyakatura G."/>
            <person name="O'dell C.N."/>
            <person name="Okwuonu G."/>
            <person name="Palmer S."/>
            <person name="Pandian R."/>
            <person name="Parker D."/>
            <person name="Parrish J."/>
            <person name="Pasternak S."/>
            <person name="Patel D."/>
            <person name="Pearce A.V."/>
            <person name="Pearson D.M."/>
            <person name="Pelan S.E."/>
            <person name="Perez L."/>
            <person name="Porter K.M."/>
            <person name="Ramsey Y."/>
            <person name="Reichwald K."/>
            <person name="Rhodes S."/>
            <person name="Ridler K.A."/>
            <person name="Schlessinger D."/>
            <person name="Schueler M.G."/>
            <person name="Sehra H.K."/>
            <person name="Shaw-Smith C."/>
            <person name="Shen H."/>
            <person name="Sheridan E.M."/>
            <person name="Shownkeen R."/>
            <person name="Skuce C.D."/>
            <person name="Smith M.L."/>
            <person name="Sotheran E.C."/>
            <person name="Steingruber H.E."/>
            <person name="Steward C.A."/>
            <person name="Storey R."/>
            <person name="Swann R.M."/>
            <person name="Swarbreck D."/>
            <person name="Tabor P.E."/>
            <person name="Taudien S."/>
            <person name="Taylor T."/>
            <person name="Teague B."/>
            <person name="Thomas K."/>
            <person name="Thorpe A."/>
            <person name="Timms K."/>
            <person name="Tracey A."/>
            <person name="Trevanion S."/>
            <person name="Tromans A.C."/>
            <person name="d'Urso M."/>
            <person name="Verduzco D."/>
            <person name="Villasana D."/>
            <person name="Waldron L."/>
            <person name="Wall M."/>
            <person name="Wang Q."/>
            <person name="Warren J."/>
            <person name="Warry G.L."/>
            <person name="Wei X."/>
            <person name="West A."/>
            <person name="Whitehead S.L."/>
            <person name="Whiteley M.N."/>
            <person name="Wilkinson J.E."/>
            <person name="Willey D.L."/>
            <person name="Williams G."/>
            <person name="Williams L."/>
            <person name="Williamson A."/>
            <person name="Williamson H."/>
            <person name="Wilming L."/>
            <person name="Woodmansey R.L."/>
            <person name="Wray P.W."/>
            <person name="Yen J."/>
            <person name="Zhang J."/>
            <person name="Zhou J."/>
            <person name="Zoghbi H."/>
            <person name="Zorilla S."/>
            <person name="Buck D."/>
            <person name="Reinhardt R."/>
            <person name="Poustka A."/>
            <person name="Rosenthal A."/>
            <person name="Lehrach H."/>
            <person name="Meindl A."/>
            <person name="Minx P.J."/>
            <person name="Hillier L.W."/>
            <person name="Willard H.F."/>
            <person name="Wilson R.K."/>
            <person name="Waterston R.H."/>
            <person name="Rice C.M."/>
            <person name="Vaudin M."/>
            <person name="Coulson A."/>
            <person name="Nelson D.L."/>
            <person name="Weinstock G."/>
            <person name="Sulston J.E."/>
            <person name="Durbin R.M."/>
            <person name="Hubbard T."/>
            <person name="Gibbs R.A."/>
            <person name="Beck S."/>
            <person name="Rogers J."/>
            <person name="Bentley D.R."/>
        </authorList>
    </citation>
    <scope>NUCLEOTIDE SEQUENCE [LARGE SCALE GENOMIC DNA] (ISOFORMS 1 AND 2)</scope>
</reference>
<reference key="4">
    <citation type="submission" date="2005-09" db="EMBL/GenBank/DDBJ databases">
        <authorList>
            <person name="Mural R.J."/>
            <person name="Istrail S."/>
            <person name="Sutton G.G."/>
            <person name="Florea L."/>
            <person name="Halpern A.L."/>
            <person name="Mobarry C.M."/>
            <person name="Lippert R."/>
            <person name="Walenz B."/>
            <person name="Shatkay H."/>
            <person name="Dew I."/>
            <person name="Miller J.R."/>
            <person name="Flanigan M.J."/>
            <person name="Edwards N.J."/>
            <person name="Bolanos R."/>
            <person name="Fasulo D."/>
            <person name="Halldorsson B.V."/>
            <person name="Hannenhalli S."/>
            <person name="Turner R."/>
            <person name="Yooseph S."/>
            <person name="Lu F."/>
            <person name="Nusskern D.R."/>
            <person name="Shue B.C."/>
            <person name="Zheng X.H."/>
            <person name="Zhong F."/>
            <person name="Delcher A.L."/>
            <person name="Huson D.H."/>
            <person name="Kravitz S.A."/>
            <person name="Mouchard L."/>
            <person name="Reinert K."/>
            <person name="Remington K.A."/>
            <person name="Clark A.G."/>
            <person name="Waterman M.S."/>
            <person name="Eichler E.E."/>
            <person name="Adams M.D."/>
            <person name="Hunkapiller M.W."/>
            <person name="Myers E.W."/>
            <person name="Venter J.C."/>
        </authorList>
    </citation>
    <scope>NUCLEOTIDE SEQUENCE [LARGE SCALE GENOMIC DNA]</scope>
</reference>
<reference key="5">
    <citation type="journal article" date="2004" name="Genome Res.">
        <title>The status, quality, and expansion of the NIH full-length cDNA project: the Mammalian Gene Collection (MGC).</title>
        <authorList>
            <consortium name="The MGC Project Team"/>
        </authorList>
    </citation>
    <scope>NUCLEOTIDE SEQUENCE [LARGE SCALE MRNA] (ISOFORM 1)</scope>
    <source>
        <tissue>Muscle</tissue>
    </source>
</reference>
<reference key="6">
    <citation type="submission" date="2000-03" db="EMBL/GenBank/DDBJ databases">
        <authorList>
            <person name="Rhodes S."/>
            <person name="Huckle E."/>
        </authorList>
    </citation>
    <scope>NUCLEOTIDE SEQUENCE [LARGE SCALE MRNA] OF 17-405</scope>
</reference>
<reference key="7">
    <citation type="journal article" date="2001" name="Arch. Biochem. Biophys.">
        <title>Isolation and characterization of a tumor-associated NADH oxidase (tNOX) from the HeLa cell surface.</title>
        <authorList>
            <person name="Yantiri F."/>
            <person name="Morre D.J."/>
        </authorList>
    </citation>
    <scope>PROTEIN SEQUENCE OF 86-90; 249-266 AND 318-333</scope>
    <source>
        <tissue>Cervix carcinoma</tissue>
    </source>
</reference>
<reference key="8">
    <citation type="journal article" date="1994" name="Int. J. Cancer">
        <title>Molecular cloning and expression of a cDNA encoding a protein detected by the K1 antibody from an ovarian carcinoma (OVCAR-3) cell line.</title>
        <authorList>
            <person name="Chang K."/>
            <person name="Pastan I."/>
        </authorList>
    </citation>
    <scope>NUCLEOTIDE SEQUENCE [MRNA] OF 275-610</scope>
    <scope>SUBCELLULAR LOCATION</scope>
    <scope>GLYCOSYLATION</scope>
    <source>
        <tissue>Ovarian carcinoma</tissue>
    </source>
</reference>
<reference key="9">
    <citation type="journal article" date="1997" name="Mol. Cell. Biochem.">
        <title>Inhibition of plasma membrane NADH oxidase activity and growth of HeLa cells by natural and synthetic retinoids.</title>
        <authorList>
            <person name="Dai S."/>
            <person name="Morre D.J."/>
            <person name="Geilen C.C."/>
            <person name="Almond-Roesler B."/>
            <person name="Orfanos C.E."/>
            <person name="Morre D.M."/>
        </authorList>
    </citation>
    <scope>ACTIVITY REGULATION</scope>
</reference>
<reference key="10">
    <citation type="journal article" date="1998" name="J. Bioenerg. Biomembr.">
        <title>The sulfonylurea-inhibited NADH oxidase activity of HeLa cell plasma membranes has properties of a protein disulfide-thiol oxidoreductase with protein disulfide-thiol interchange activity.</title>
        <authorList>
            <person name="Morre D.J."/>
            <person name="Chueh P.-J."/>
            <person name="Lawler J."/>
            <person name="Morre D.M."/>
        </authorList>
    </citation>
    <scope>FUNCTION</scope>
    <scope>SUBCELLULAR LOCATION</scope>
    <scope>ACTIVITY REGULATION</scope>
</reference>
<reference key="11">
    <citation type="journal article" date="1999" name="Biochim. Biophys. Acta">
        <title>The plasma membrane NADH oxidase of HeLa cells has hydroquinone oxidase activity.</title>
        <authorList>
            <person name="Kishi T."/>
            <person name="Morre D.M."/>
            <person name="Morre D.J."/>
        </authorList>
    </citation>
    <scope>HYDROQUINONE OXIDASE ACTIVITY</scope>
</reference>
<reference key="12">
    <citation type="journal article" date="2001" name="Biochemistry">
        <title>Cancer isoform of a tumor-associated cell surface NADH oxidase (tNOX) has properties of a prion.</title>
        <authorList>
            <person name="Kelker M."/>
            <person name="Kim C."/>
            <person name="Chueh P.-J."/>
            <person name="Guimont R."/>
            <person name="Morre D.M."/>
            <person name="Morre D.J."/>
        </authorList>
    </citation>
    <scope>PRION-LIKE PROPERTIES</scope>
</reference>
<reference key="13">
    <citation type="journal article" date="2001" name="Arch. Biochem. Biophys.">
        <title>Surface NADH oxidase of HeLa cells lacks intrinsic membrane binding motifs.</title>
        <authorList>
            <person name="Morre D.J."/>
            <person name="Sedlak D."/>
            <person name="Tang X."/>
            <person name="Chueh P.-J."/>
            <person name="Geng T."/>
            <person name="Morre D.M."/>
        </authorList>
    </citation>
    <scope>SUBCELLULAR LOCATION</scope>
</reference>
<reference key="14">
    <citation type="journal article" date="2002" name="Cancer Immunol. Immunother.">
        <title>Monoclonal antibody to a cancer-specific and drug-responsive hydroquinone (NADH) oxidase from the sera of cancer patients.</title>
        <authorList>
            <person name="Cho N."/>
            <person name="Chueh P.-J."/>
            <person name="Kim C."/>
            <person name="Caldwell S."/>
            <person name="Morre D.M."/>
            <person name="Morre D.J."/>
        </authorList>
    </citation>
    <scope>DISEASE</scope>
</reference>
<reference key="15">
    <citation type="journal article" date="2002" name="Biochemistry">
        <title>Biochemical basis for the biological clock.</title>
        <authorList>
            <person name="Morre D.J."/>
            <person name="Chueh P.-J."/>
            <person name="Pletcher J."/>
            <person name="Tang X."/>
            <person name="Wu L.Y."/>
            <person name="Morre D.M."/>
        </authorList>
    </citation>
    <scope>FUNCTION IN BIOLOGICAL CLOCK CONTROL</scope>
</reference>
<reference key="16">
    <citation type="journal article" date="2012" name="N. Engl. J. Med.">
        <title>Diagnostic exome sequencing in persons with severe intellectual disability.</title>
        <authorList>
            <person name="de Ligt J."/>
            <person name="Willemsen M.H."/>
            <person name="van Bon B.W."/>
            <person name="Kleefstra T."/>
            <person name="Yntema H.G."/>
            <person name="Kroes T."/>
            <person name="Vulto-van Silfhout A.T."/>
            <person name="Koolen D.A."/>
            <person name="de Vries P."/>
            <person name="Gilissen C."/>
            <person name="del Rosario M."/>
            <person name="Hoischen A."/>
            <person name="Scheffer H."/>
            <person name="de Vries B.B."/>
            <person name="Brunner H.G."/>
            <person name="Veltman J.A."/>
            <person name="Vissers L.E."/>
        </authorList>
    </citation>
    <scope>VARIANT ILE-202</scope>
</reference>
<reference key="17">
    <citation type="journal article" date="2024" name="Hum. Genet.">
        <title>Exome variant prioritization in a large cohort of hearing-impaired individuals indicates IKZF2 to be associated with non-syndromic hearing loss and guides future research of unsolved cases.</title>
        <authorList>
            <consortium name="DOOFNL Consortium"/>
            <person name="Velde H.M."/>
            <person name="Vaseghi-Shanjani M."/>
            <person name="Smits J.J."/>
            <person name="Ramakrishnan G."/>
            <person name="Oostrik J."/>
            <person name="Wesdorp M."/>
            <person name="Astuti G."/>
            <person name="Yntema H.G."/>
            <person name="Hoefsloot L."/>
            <person name="Lanting C.P."/>
            <person name="Huynen M.A."/>
            <person name="Lehman A."/>
            <person name="Turvey S.E."/>
            <person name="Pennings R.J.E."/>
            <person name="Kremer H."/>
        </authorList>
    </citation>
    <scope>VARIANT ILE-71</scope>
</reference>
<accession>Q16206</accession>
<accession>A8K197</accession>
<accession>A8K1C2</accession>
<accession>Q5VTJ1</accession>
<accession>Q5VTJ2</accession>
<accession>Q8WUX0</accession>
<accession>Q9NTP6</accession>
<accession>Q9UH82</accession>
<comment type="function">
    <text evidence="4 9">May be involved in cell growth. Probably acts as a terminal oxidase of plasma electron transport from cytosolic NAD(P)H via hydroquinones to acceptors at the cell surface. Hydroquinone oxidase activity alternates with a protein disulfide-thiol interchange/oxidoreductase activity which may control physical membrane displacements associated with vesicle budding or cell enlargement. The activities oscillate with a period length of 22 minutes and play a role in control of the ultradian cellular biological clock.</text>
</comment>
<comment type="cofactor">
    <cofactor evidence="3">
        <name>Cu cation</name>
        <dbReference type="ChEBI" id="CHEBI:23378"/>
    </cofactor>
</comment>
<comment type="activity regulation">
    <text evidence="3 8 9">Inhibited by the antitumor sulfonylurea LY181984, the vabilloid capsaicin, and retinoids.</text>
</comment>
<comment type="interaction">
    <interactant intactId="EBI-10179508">
        <id>Q16206-2</id>
    </interactant>
    <interactant intactId="EBI-10292696">
        <id>Q96Q77</id>
        <label>CIB3</label>
    </interactant>
    <organismsDiffer>false</organismsDiffer>
    <experiments>3</experiments>
</comment>
<comment type="interaction">
    <interactant intactId="EBI-10179508">
        <id>Q16206-2</id>
    </interactant>
    <interactant intactId="EBI-713221">
        <id>Q8TC92</id>
        <label>ENOX1</label>
    </interactant>
    <organismsDiffer>false</organismsDiffer>
    <experiments>3</experiments>
</comment>
<comment type="interaction">
    <interactant intactId="EBI-10179508">
        <id>Q16206-2</id>
    </interactant>
    <interactant intactId="EBI-10178634">
        <id>P43364-2</id>
        <label>MAGEA11</label>
    </interactant>
    <organismsDiffer>false</organismsDiffer>
    <experiments>3</experiments>
</comment>
<comment type="interaction">
    <interactant intactId="EBI-10179508">
        <id>Q16206-2</id>
    </interactant>
    <interactant intactId="EBI-5773143">
        <id>Q6P2C6</id>
        <label>MLLT6</label>
    </interactant>
    <organismsDiffer>false</organismsDiffer>
    <experiments>3</experiments>
</comment>
<comment type="interaction">
    <interactant intactId="EBI-10179508">
        <id>Q16206-2</id>
    </interactant>
    <interactant intactId="EBI-607085">
        <id>P09012</id>
        <label>SNRPA</label>
    </interactant>
    <organismsDiffer>false</organismsDiffer>
    <experiments>3</experiments>
</comment>
<comment type="interaction">
    <interactant intactId="EBI-10179508">
        <id>Q16206-2</id>
    </interactant>
    <interactant intactId="EBI-523498">
        <id>O00463</id>
        <label>TRAF5</label>
    </interactant>
    <organismsDiffer>false</organismsDiffer>
    <experiments>3</experiments>
</comment>
<comment type="subcellular location">
    <subcellularLocation>
        <location>Cell membrane</location>
    </subcellularLocation>
    <subcellularLocation>
        <location>Secreted</location>
        <location>Extracellular space</location>
    </subcellularLocation>
    <text>Extracellular and plasma membrane-associated.</text>
</comment>
<comment type="alternative products">
    <event type="alternative splicing"/>
    <isoform>
        <id>Q16206-1</id>
        <name>1</name>
        <sequence type="displayed"/>
    </isoform>
    <isoform>
        <id>Q16206-2</id>
        <name>2</name>
        <sequence type="described" ref="VSP_015719"/>
    </isoform>
</comment>
<comment type="tissue specificity">
    <text>Found in the sera of cancer patients with a wide variety of cancers including breast, prostate, lung and ovarian cancers, leukemias, and lymphomas. Not found in the serum of healthy volunteers or patients with disorders other than cancer. Probably shed into serum by cancer cells. Found on the cell borders of renal, kidney and ovarian carcinomas but not on the borders of surrounding non-cancerous stromal cells.</text>
</comment>
<comment type="PTM">
    <text evidence="7">Glycosylated.</text>
</comment>
<comment type="miscellaneous">
    <text>Has several properties associated with prions including resistance to proteases, resistance to cyanogen bromide digestion, and the ability to form amyloid filaments resembling those of spongiform encephalopathies.</text>
</comment>
<comment type="similarity">
    <text evidence="11">Belongs to the ENOX family.</text>
</comment>
<comment type="sequence caution" evidence="11">
    <conflict type="frameshift">
        <sequence resource="EMBL-CDS" id="AAB30428"/>
    </conflict>
</comment>
<sequence length="610" mass="70082">MQRDFRWLWVYEIGYAADNSRTLNVDSTAMTLPMSDPTAWATAMNNLGMAPLGIAGQPILPDFDPALGMMTGIPPITPMMPGLGIVPPPIPPDMPVVKEIIHCKSCTLFPPNPNLPPPATRERPPGCKTVFVGGLPENGTEQIIVEVFEQCGEIIAIRKSKKNFCHIRFAEEYMVDKALYLSGYRIRLGSSTDKKDTGRLHVDFAQARDDLYEWECKQRMLAREERHRRRMEEERLRPPSPPPVVHYSDHECSIVAEKLKDDSKFSEAVQTLLTWIERGEVNRRSANNFYSMIQSANSHVRRLVNEKAAHEKDMEEAKEKFKQALSGILIQFEQIVAVYHSASKQKAWDHFTKAQRKNISVWCKQAEEIRNIHNDELMGIRREEEMEMSDDEIEEMTETKETEESALVSQAEALKEENDSLRWQLDAYRNEVELLKQEQGKVHREDDPNKEQQLKLLQQALQGMQQHLLKVQEEYKKKEAELEKLKDDKLQVEKMLENLKEKESCASRLCASNQDSEYPLEKTMNSSPIKSEREALLVGIISTFLHVHPFGASIEYICSYLHRLDNKICTSDVECLMGRLQHTFKQEMTGVGASLEKRWKFCGFEGLKLT</sequence>
<gene>
    <name type="primary">ENOX2</name>
    <name type="synonym">COVA1</name>
</gene>
<feature type="chain" id="PRO_0000079275" description="Ecto-NOX disulfide-thiol exchanger 2">
    <location>
        <begin position="1"/>
        <end position="610"/>
    </location>
</feature>
<feature type="domain" description="RRM" evidence="2">
    <location>
        <begin position="128"/>
        <end position="207"/>
    </location>
</feature>
<feature type="coiled-coil region" evidence="1">
    <location>
        <begin position="293"/>
        <end position="328"/>
    </location>
</feature>
<feature type="coiled-coil region" evidence="1">
    <location>
        <begin position="381"/>
        <end position="505"/>
    </location>
</feature>
<feature type="splice variant" id="VSP_015719" description="In isoform 2." evidence="10">
    <location>
        <begin position="1"/>
        <end position="29"/>
    </location>
</feature>
<feature type="sequence variant" id="VAR_090438" description="Found in a patient with autosomal recessive hearing loss; uncertain significance." evidence="6">
    <original>T</original>
    <variation>I</variation>
    <location>
        <position position="71"/>
    </location>
</feature>
<feature type="sequence variant" id="VAR_069427" description="In dbSNP:rs754363472." evidence="5">
    <original>V</original>
    <variation>I</variation>
    <location>
        <position position="202"/>
    </location>
</feature>
<feature type="mutagenesis site" description="No effect on activity but response to capsaicin is lost." evidence="3">
    <original>M</original>
    <variation>A</variation>
    <location>
        <position position="396"/>
    </location>
</feature>
<feature type="mutagenesis site" description="No effect on activity." evidence="3">
    <original>C</original>
    <variation>A</variation>
    <location>
        <position position="505"/>
    </location>
</feature>
<feature type="mutagenesis site" description="Loss of activity." evidence="3">
    <original>C</original>
    <variation>A</variation>
    <location>
        <position position="510"/>
    </location>
</feature>
<feature type="mutagenesis site" description="Loss of activity." evidence="3">
    <original>H</original>
    <variation>A</variation>
    <location>
        <position position="546"/>
    </location>
</feature>
<feature type="mutagenesis site" description="Period length of activity extended to 42 minutes." evidence="3">
    <original>C</original>
    <variation>A</variation>
    <location>
        <position position="558"/>
    </location>
</feature>
<feature type="mutagenesis site" description="Loss of activity." evidence="3">
    <original>H</original>
    <variation>A</variation>
    <location>
        <position position="562"/>
    </location>
</feature>
<feature type="mutagenesis site" description="Loss of activity." evidence="3">
    <original>C</original>
    <variation>A</variation>
    <location>
        <position position="569"/>
    </location>
</feature>
<feature type="mutagenesis site" description="Period length of activity extended to 36 minutes." evidence="3">
    <original>C</original>
    <variation>A</variation>
    <location>
        <position position="575"/>
    </location>
</feature>
<feature type="mutagenesis site" description="Loss of activity." evidence="3">
    <original>G</original>
    <variation>V</variation>
    <location>
        <position position="592"/>
    </location>
</feature>
<feature type="mutagenesis site" description="Period length of activity extended to 36 minutes." evidence="3">
    <original>C</original>
    <variation>A</variation>
    <location>
        <position position="602"/>
    </location>
</feature>
<feature type="sequence conflict" description="In Ref. 2; AK000353." evidence="11" ref="2">
    <original>R</original>
    <variation>G</variation>
    <location>
        <position position="123"/>
    </location>
</feature>
<feature type="sequence conflict" description="In Ref. 2; AK000353." evidence="11" ref="2">
    <original>E</original>
    <variation>G</variation>
    <location>
        <position position="311"/>
    </location>
</feature>
<feature type="sequence conflict" description="In Ref. 7; AA sequence." evidence="11" ref="7">
    <original>S</original>
    <variation>V</variation>
    <location>
        <position position="326"/>
    </location>
</feature>
<feature type="sequence conflict" description="In Ref. 7; AA sequence." evidence="11" ref="7">
    <original>I</original>
    <variation>V</variation>
    <location>
        <position position="328"/>
    </location>
</feature>
<feature type="sequence conflict" description="In Ref. 7; AA sequence." evidence="11" ref="7">
    <original>F</original>
    <variation>A</variation>
    <location>
        <position position="332"/>
    </location>
</feature>
<feature type="sequence conflict" description="In Ref. 5; AAH19254." evidence="11" ref="5">
    <location>
        <begin position="406"/>
        <end position="407"/>
    </location>
</feature>
<name>ENOX2_HUMAN</name>
<proteinExistence type="evidence at protein level"/>
<organism>
    <name type="scientific">Homo sapiens</name>
    <name type="common">Human</name>
    <dbReference type="NCBI Taxonomy" id="9606"/>
    <lineage>
        <taxon>Eukaryota</taxon>
        <taxon>Metazoa</taxon>
        <taxon>Chordata</taxon>
        <taxon>Craniata</taxon>
        <taxon>Vertebrata</taxon>
        <taxon>Euteleostomi</taxon>
        <taxon>Mammalia</taxon>
        <taxon>Eutheria</taxon>
        <taxon>Euarchontoglires</taxon>
        <taxon>Primates</taxon>
        <taxon>Haplorrhini</taxon>
        <taxon>Catarrhini</taxon>
        <taxon>Hominidae</taxon>
        <taxon>Homo</taxon>
    </lineage>
</organism>
<keyword id="KW-0025">Alternative splicing</keyword>
<keyword id="KW-0090">Biological rhythms</keyword>
<keyword id="KW-1003">Cell membrane</keyword>
<keyword id="KW-0175">Coiled coil</keyword>
<keyword id="KW-0186">Copper</keyword>
<keyword id="KW-0903">Direct protein sequencing</keyword>
<keyword id="KW-0249">Electron transport</keyword>
<keyword id="KW-0325">Glycoprotein</keyword>
<keyword id="KW-0341">Growth regulation</keyword>
<keyword id="KW-0472">Membrane</keyword>
<keyword id="KW-0520">NAD</keyword>
<keyword id="KW-0560">Oxidoreductase</keyword>
<keyword id="KW-1267">Proteomics identification</keyword>
<keyword id="KW-1185">Reference proteome</keyword>
<keyword id="KW-0964">Secreted</keyword>
<keyword id="KW-0813">Transport</keyword>
<evidence type="ECO:0000255" key="1"/>
<evidence type="ECO:0000255" key="2">
    <source>
        <dbReference type="PROSITE-ProRule" id="PRU00176"/>
    </source>
</evidence>
<evidence type="ECO:0000269" key="3">
    <source>
    </source>
</evidence>
<evidence type="ECO:0000269" key="4">
    <source>
    </source>
</evidence>
<evidence type="ECO:0000269" key="5">
    <source>
    </source>
</evidence>
<evidence type="ECO:0000269" key="6">
    <source>
    </source>
</evidence>
<evidence type="ECO:0000269" key="7">
    <source>
    </source>
</evidence>
<evidence type="ECO:0000269" key="8">
    <source>
    </source>
</evidence>
<evidence type="ECO:0000269" key="9">
    <source>
    </source>
</evidence>
<evidence type="ECO:0000303" key="10">
    <source>
    </source>
</evidence>
<evidence type="ECO:0000305" key="11"/>
<dbReference type="EC" id="1.-.-.-"/>
<dbReference type="EMBL" id="AF207881">
    <property type="protein sequence ID" value="AAF20934.2"/>
    <property type="molecule type" value="mRNA"/>
</dbReference>
<dbReference type="EMBL" id="AK000353">
    <property type="status" value="NOT_ANNOTATED_CDS"/>
    <property type="molecule type" value="mRNA"/>
</dbReference>
<dbReference type="EMBL" id="AK289837">
    <property type="protein sequence ID" value="BAF82526.1"/>
    <property type="molecule type" value="mRNA"/>
</dbReference>
<dbReference type="EMBL" id="AK289812">
    <property type="protein sequence ID" value="BAF82501.1"/>
    <property type="molecule type" value="mRNA"/>
</dbReference>
<dbReference type="EMBL" id="AL049733">
    <property type="status" value="NOT_ANNOTATED_CDS"/>
    <property type="molecule type" value="Genomic_DNA"/>
</dbReference>
<dbReference type="EMBL" id="AL591908">
    <property type="status" value="NOT_ANNOTATED_CDS"/>
    <property type="molecule type" value="Genomic_DNA"/>
</dbReference>
<dbReference type="EMBL" id="CH471107">
    <property type="protein sequence ID" value="EAX11796.1"/>
    <property type="molecule type" value="Genomic_DNA"/>
</dbReference>
<dbReference type="EMBL" id="CH471107">
    <property type="protein sequence ID" value="EAX11797.1"/>
    <property type="molecule type" value="Genomic_DNA"/>
</dbReference>
<dbReference type="EMBL" id="BC019254">
    <property type="protein sequence ID" value="AAH19254.2"/>
    <property type="molecule type" value="mRNA"/>
</dbReference>
<dbReference type="EMBL" id="BC140874">
    <property type="protein sequence ID" value="AAI40875.1"/>
    <property type="molecule type" value="mRNA"/>
</dbReference>
<dbReference type="EMBL" id="AL133207">
    <property type="protein sequence ID" value="CAB61581.2"/>
    <property type="molecule type" value="mRNA"/>
</dbReference>
<dbReference type="EMBL" id="S72904">
    <property type="protein sequence ID" value="AAB30428.1"/>
    <property type="status" value="ALT_FRAME"/>
    <property type="molecule type" value="mRNA"/>
</dbReference>
<dbReference type="CCDS" id="CCDS14626.1">
    <molecule id="Q16206-1"/>
</dbReference>
<dbReference type="CCDS" id="CCDS14627.1">
    <molecule id="Q16206-2"/>
</dbReference>
<dbReference type="PIR" id="I54780">
    <property type="entry name" value="I54780"/>
</dbReference>
<dbReference type="RefSeq" id="NP_001268665.1">
    <molecule id="Q16206-2"/>
    <property type="nucleotide sequence ID" value="NM_001281736.2"/>
</dbReference>
<dbReference type="RefSeq" id="NP_001369445.1">
    <molecule id="Q16206-1"/>
    <property type="nucleotide sequence ID" value="NM_001382516.1"/>
</dbReference>
<dbReference type="RefSeq" id="NP_001369446.1">
    <molecule id="Q16206-1"/>
    <property type="nucleotide sequence ID" value="NM_001382517.1"/>
</dbReference>
<dbReference type="RefSeq" id="NP_006366.2">
    <molecule id="Q16206-2"/>
    <property type="nucleotide sequence ID" value="NM_006375.3"/>
</dbReference>
<dbReference type="RefSeq" id="NP_872114.1">
    <molecule id="Q16206-1"/>
    <property type="nucleotide sequence ID" value="NM_182314.3"/>
</dbReference>
<dbReference type="RefSeq" id="XP_005262411.1">
    <property type="nucleotide sequence ID" value="XM_005262354.3"/>
</dbReference>
<dbReference type="RefSeq" id="XP_011529549.1">
    <property type="nucleotide sequence ID" value="XM_011531247.2"/>
</dbReference>
<dbReference type="RefSeq" id="XP_011529551.1">
    <molecule id="Q16206-1"/>
    <property type="nucleotide sequence ID" value="XM_011531249.3"/>
</dbReference>
<dbReference type="RefSeq" id="XP_011529553.1">
    <property type="nucleotide sequence ID" value="XM_011531251.2"/>
</dbReference>
<dbReference type="RefSeq" id="XP_016884715.1">
    <property type="nucleotide sequence ID" value="XM_017029226.1"/>
</dbReference>
<dbReference type="RefSeq" id="XP_016884716.1">
    <property type="nucleotide sequence ID" value="XM_017029227.1"/>
</dbReference>
<dbReference type="RefSeq" id="XP_016884717.1">
    <property type="nucleotide sequence ID" value="XM_017029228.1"/>
</dbReference>
<dbReference type="RefSeq" id="XP_047297723.1">
    <molecule id="Q16206-1"/>
    <property type="nucleotide sequence ID" value="XM_047441767.1"/>
</dbReference>
<dbReference type="RefSeq" id="XP_047297725.1">
    <molecule id="Q16206-2"/>
    <property type="nucleotide sequence ID" value="XM_047441769.1"/>
</dbReference>
<dbReference type="RefSeq" id="XP_047297726.1">
    <molecule id="Q16206-2"/>
    <property type="nucleotide sequence ID" value="XM_047441770.1"/>
</dbReference>
<dbReference type="RefSeq" id="XP_047297727.1">
    <molecule id="Q16206-2"/>
    <property type="nucleotide sequence ID" value="XM_047441771.1"/>
</dbReference>
<dbReference type="RefSeq" id="XP_047297728.1">
    <molecule id="Q16206-2"/>
    <property type="nucleotide sequence ID" value="XM_047441772.1"/>
</dbReference>
<dbReference type="RefSeq" id="XP_047297729.1">
    <molecule id="Q16206-2"/>
    <property type="nucleotide sequence ID" value="XM_047441773.1"/>
</dbReference>
<dbReference type="RefSeq" id="XP_054182347.1">
    <molecule id="Q16206-1"/>
    <property type="nucleotide sequence ID" value="XM_054326372.1"/>
</dbReference>
<dbReference type="RefSeq" id="XP_054182348.1">
    <molecule id="Q16206-1"/>
    <property type="nucleotide sequence ID" value="XM_054326373.1"/>
</dbReference>
<dbReference type="RefSeq" id="XP_054182350.1">
    <molecule id="Q16206-2"/>
    <property type="nucleotide sequence ID" value="XM_054326375.1"/>
</dbReference>
<dbReference type="RefSeq" id="XP_054182351.1">
    <molecule id="Q16206-2"/>
    <property type="nucleotide sequence ID" value="XM_054326376.1"/>
</dbReference>
<dbReference type="RefSeq" id="XP_054182352.1">
    <molecule id="Q16206-2"/>
    <property type="nucleotide sequence ID" value="XM_054326377.1"/>
</dbReference>
<dbReference type="RefSeq" id="XP_054182353.1">
    <molecule id="Q16206-2"/>
    <property type="nucleotide sequence ID" value="XM_054326378.1"/>
</dbReference>
<dbReference type="SMR" id="Q16206"/>
<dbReference type="BioGRID" id="115758">
    <property type="interactions" value="33"/>
</dbReference>
<dbReference type="FunCoup" id="Q16206">
    <property type="interactions" value="1576"/>
</dbReference>
<dbReference type="IntAct" id="Q16206">
    <property type="interactions" value="18"/>
</dbReference>
<dbReference type="MINT" id="Q16206"/>
<dbReference type="STRING" id="9606.ENSP00000337146"/>
<dbReference type="ChEMBL" id="CHEMBL3714292"/>
<dbReference type="DrugBank" id="DB04915">
    <property type="generic name" value="Idronoxil"/>
</dbReference>
<dbReference type="GlyGen" id="Q16206">
    <property type="glycosylation" value="1 site, 1 O-linked glycan (1 site)"/>
</dbReference>
<dbReference type="iPTMnet" id="Q16206"/>
<dbReference type="PhosphoSitePlus" id="Q16206"/>
<dbReference type="BioMuta" id="ENOX2"/>
<dbReference type="DMDM" id="34978371"/>
<dbReference type="jPOST" id="Q16206"/>
<dbReference type="MassIVE" id="Q16206"/>
<dbReference type="PaxDb" id="9606-ENSP00000337146"/>
<dbReference type="PeptideAtlas" id="Q16206"/>
<dbReference type="ProteomicsDB" id="60838">
    <molecule id="Q16206-1"/>
</dbReference>
<dbReference type="ProteomicsDB" id="60839">
    <molecule id="Q16206-2"/>
</dbReference>
<dbReference type="Pumba" id="Q16206"/>
<dbReference type="Antibodypedia" id="354">
    <property type="antibodies" value="196 antibodies from 29 providers"/>
</dbReference>
<dbReference type="DNASU" id="10495"/>
<dbReference type="Ensembl" id="ENST00000338144.8">
    <molecule id="Q16206-1"/>
    <property type="protein sequence ID" value="ENSP00000337146.3"/>
    <property type="gene ID" value="ENSG00000165675.20"/>
</dbReference>
<dbReference type="Ensembl" id="ENST00000370927.5">
    <molecule id="Q16206-1"/>
    <property type="protein sequence ID" value="ENSP00000359965.1"/>
    <property type="gene ID" value="ENSG00000165675.20"/>
</dbReference>
<dbReference type="Ensembl" id="ENST00000370935.5">
    <molecule id="Q16206-2"/>
    <property type="protein sequence ID" value="ENSP00000359973.1"/>
    <property type="gene ID" value="ENSG00000165675.20"/>
</dbReference>
<dbReference type="Ensembl" id="ENST00000394363.6">
    <molecule id="Q16206-2"/>
    <property type="protein sequence ID" value="ENSP00000377890.1"/>
    <property type="gene ID" value="ENSG00000165675.20"/>
</dbReference>
<dbReference type="GeneID" id="10495"/>
<dbReference type="KEGG" id="hsa:10495"/>
<dbReference type="MANE-Select" id="ENST00000394363.6">
    <molecule id="Q16206-2"/>
    <property type="protein sequence ID" value="ENSP00000377890.1"/>
    <property type="RefSeq nucleotide sequence ID" value="NM_006375.4"/>
    <property type="RefSeq protein sequence ID" value="NP_006366.2"/>
</dbReference>
<dbReference type="UCSC" id="uc004evw.5">
    <molecule id="Q16206-1"/>
    <property type="organism name" value="human"/>
</dbReference>
<dbReference type="AGR" id="HGNC:2259"/>
<dbReference type="CTD" id="10495"/>
<dbReference type="DisGeNET" id="10495"/>
<dbReference type="GeneCards" id="ENOX2"/>
<dbReference type="HGNC" id="HGNC:2259">
    <property type="gene designation" value="ENOX2"/>
</dbReference>
<dbReference type="HPA" id="ENSG00000165675">
    <property type="expression patterns" value="Low tissue specificity"/>
</dbReference>
<dbReference type="MIM" id="300282">
    <property type="type" value="gene"/>
</dbReference>
<dbReference type="neXtProt" id="NX_Q16206"/>
<dbReference type="OpenTargets" id="ENSG00000165675"/>
<dbReference type="PharmGKB" id="PA162385106"/>
<dbReference type="VEuPathDB" id="HostDB:ENSG00000165675"/>
<dbReference type="eggNOG" id="ENOG502QQ8G">
    <property type="taxonomic scope" value="Eukaryota"/>
</dbReference>
<dbReference type="GeneTree" id="ENSGT00390000006788"/>
<dbReference type="HOGENOM" id="CLU_019282_1_1_1"/>
<dbReference type="InParanoid" id="Q16206"/>
<dbReference type="OMA" id="FNVYRNH"/>
<dbReference type="OrthoDB" id="10039782at2759"/>
<dbReference type="PAN-GO" id="Q16206">
    <property type="GO annotations" value="2 GO annotations based on evolutionary models"/>
</dbReference>
<dbReference type="PhylomeDB" id="Q16206"/>
<dbReference type="TreeFam" id="TF323802"/>
<dbReference type="PathwayCommons" id="Q16206"/>
<dbReference type="SignaLink" id="Q16206"/>
<dbReference type="SIGNOR" id="Q16206"/>
<dbReference type="BioGRID-ORCS" id="10495">
    <property type="hits" value="12 hits in 779 CRISPR screens"/>
</dbReference>
<dbReference type="ChiTaRS" id="ENOX2">
    <property type="organism name" value="human"/>
</dbReference>
<dbReference type="GeneWiki" id="ENOX2"/>
<dbReference type="GenomeRNAi" id="10495"/>
<dbReference type="Pharos" id="Q16206">
    <property type="development level" value="Tbio"/>
</dbReference>
<dbReference type="PRO" id="PR:Q16206"/>
<dbReference type="Proteomes" id="UP000005640">
    <property type="component" value="Chromosome X"/>
</dbReference>
<dbReference type="RNAct" id="Q16206">
    <property type="molecule type" value="protein"/>
</dbReference>
<dbReference type="Bgee" id="ENSG00000165675">
    <property type="expression patterns" value="Expressed in calcaneal tendon and 197 other cell types or tissues"/>
</dbReference>
<dbReference type="ExpressionAtlas" id="Q16206">
    <property type="expression patterns" value="baseline and differential"/>
</dbReference>
<dbReference type="GO" id="GO:0005829">
    <property type="term" value="C:cytosol"/>
    <property type="evidence" value="ECO:0000304"/>
    <property type="project" value="ProtInc"/>
</dbReference>
<dbReference type="GO" id="GO:0009897">
    <property type="term" value="C:external side of plasma membrane"/>
    <property type="evidence" value="ECO:0000314"/>
    <property type="project" value="UniProtKB"/>
</dbReference>
<dbReference type="GO" id="GO:0005576">
    <property type="term" value="C:extracellular region"/>
    <property type="evidence" value="ECO:0007669"/>
    <property type="project" value="UniProtKB-SubCell"/>
</dbReference>
<dbReference type="GO" id="GO:0005886">
    <property type="term" value="C:plasma membrane"/>
    <property type="evidence" value="ECO:0000318"/>
    <property type="project" value="GO_Central"/>
</dbReference>
<dbReference type="GO" id="GO:0016491">
    <property type="term" value="F:oxidoreductase activity"/>
    <property type="evidence" value="ECO:0007669"/>
    <property type="project" value="UniProtKB-KW"/>
</dbReference>
<dbReference type="GO" id="GO:0003723">
    <property type="term" value="F:RNA binding"/>
    <property type="evidence" value="ECO:0007669"/>
    <property type="project" value="InterPro"/>
</dbReference>
<dbReference type="GO" id="GO:0022900">
    <property type="term" value="P:electron transport chain"/>
    <property type="evidence" value="ECO:0000314"/>
    <property type="project" value="UniProtKB"/>
</dbReference>
<dbReference type="GO" id="GO:0007624">
    <property type="term" value="P:ultradian rhythm"/>
    <property type="evidence" value="ECO:0000314"/>
    <property type="project" value="UniProtKB"/>
</dbReference>
<dbReference type="CDD" id="cd12228">
    <property type="entry name" value="RRM_ENOX"/>
    <property type="match status" value="1"/>
</dbReference>
<dbReference type="FunFam" id="3.30.70.330:FF:000083">
    <property type="entry name" value="Putative ecto-NOX disulfide-thiol exchanger 1"/>
    <property type="match status" value="1"/>
</dbReference>
<dbReference type="Gene3D" id="3.30.70.330">
    <property type="match status" value="1"/>
</dbReference>
<dbReference type="InterPro" id="IPR038876">
    <property type="entry name" value="ENOX"/>
</dbReference>
<dbReference type="InterPro" id="IPR056611">
    <property type="entry name" value="ENOX1/2_dom"/>
</dbReference>
<dbReference type="InterPro" id="IPR034140">
    <property type="entry name" value="ENOX_RRM"/>
</dbReference>
<dbReference type="InterPro" id="IPR012677">
    <property type="entry name" value="Nucleotide-bd_a/b_plait_sf"/>
</dbReference>
<dbReference type="InterPro" id="IPR035979">
    <property type="entry name" value="RBD_domain_sf"/>
</dbReference>
<dbReference type="InterPro" id="IPR000504">
    <property type="entry name" value="RRM_dom"/>
</dbReference>
<dbReference type="PANTHER" id="PTHR16001">
    <property type="entry name" value="ECTO-NOX DISULFIDE-THIOL EXCHANGER"/>
    <property type="match status" value="1"/>
</dbReference>
<dbReference type="PANTHER" id="PTHR16001:SF7">
    <property type="entry name" value="ECTO-NOX DISULFIDE-THIOL EXCHANGER 2"/>
    <property type="match status" value="1"/>
</dbReference>
<dbReference type="Pfam" id="PF23267">
    <property type="entry name" value="ENOX1"/>
    <property type="match status" value="1"/>
</dbReference>
<dbReference type="Pfam" id="PF00076">
    <property type="entry name" value="RRM_1"/>
    <property type="match status" value="1"/>
</dbReference>
<dbReference type="SMART" id="SM00360">
    <property type="entry name" value="RRM"/>
    <property type="match status" value="1"/>
</dbReference>
<dbReference type="SUPFAM" id="SSF54928">
    <property type="entry name" value="RNA-binding domain, RBD"/>
    <property type="match status" value="1"/>
</dbReference>
<dbReference type="PROSITE" id="PS50102">
    <property type="entry name" value="RRM"/>
    <property type="match status" value="1"/>
</dbReference>
<protein>
    <recommendedName>
        <fullName>Ecto-NOX disulfide-thiol exchanger 2</fullName>
    </recommendedName>
    <alternativeName>
        <fullName>APK1 antigen</fullName>
    </alternativeName>
    <alternativeName>
        <fullName>Cytosolic ovarian carcinoma antigen 1</fullName>
    </alternativeName>
    <alternativeName>
        <fullName>Tumor-associated hydroquinone oxidase</fullName>
        <shortName>tNOX</shortName>
    </alternativeName>
    <domain>
        <recommendedName>
            <fullName>Hydroquinone [NADH] oxidase</fullName>
            <ecNumber>1.-.-.-</ecNumber>
        </recommendedName>
    </domain>
    <domain>
        <recommendedName>
            <fullName>Protein disulfide-thiol oxidoreductase</fullName>
            <ecNumber>1.-.-.-</ecNumber>
        </recommendedName>
    </domain>
</protein>